<organism>
    <name type="scientific">Schizosaccharomyces pombe (strain 972 / ATCC 24843)</name>
    <name type="common">Fission yeast</name>
    <dbReference type="NCBI Taxonomy" id="284812"/>
    <lineage>
        <taxon>Eukaryota</taxon>
        <taxon>Fungi</taxon>
        <taxon>Dikarya</taxon>
        <taxon>Ascomycota</taxon>
        <taxon>Taphrinomycotina</taxon>
        <taxon>Schizosaccharomycetes</taxon>
        <taxon>Schizosaccharomycetales</taxon>
        <taxon>Schizosaccharomycetaceae</taxon>
        <taxon>Schizosaccharomyces</taxon>
    </lineage>
</organism>
<comment type="function">
    <text>In response to mating-pheromone signaling or nitrogen starvation, it interacts with mat1-Pc. This activates the expression of one of two mating-type-specific genes sxa2 or map3, which leads to inactivation of the P-factor. May also interact with mat1-Mc.</text>
</comment>
<comment type="subcellular location">
    <subcellularLocation>
        <location>Nucleus</location>
    </subcellularLocation>
</comment>
<protein>
    <recommendedName>
        <fullName>Pheromone receptor transcription activator</fullName>
    </recommendedName>
    <alternativeName>
        <fullName>Protein map1</fullName>
    </alternativeName>
</protein>
<feature type="chain" id="PRO_0000199442" description="Pheromone receptor transcription activator">
    <location>
        <begin position="1"/>
        <end position="398"/>
    </location>
</feature>
<feature type="domain" description="MADS-box" evidence="1">
    <location>
        <begin position="20"/>
        <end position="74"/>
    </location>
</feature>
<feature type="region of interest" description="Disordered" evidence="2">
    <location>
        <begin position="1"/>
        <end position="30"/>
    </location>
</feature>
<feature type="region of interest" description="Disordered" evidence="2">
    <location>
        <begin position="101"/>
        <end position="125"/>
    </location>
</feature>
<feature type="region of interest" description="Disordered" evidence="2">
    <location>
        <begin position="254"/>
        <end position="317"/>
    </location>
</feature>
<feature type="compositionally biased region" description="Low complexity" evidence="2">
    <location>
        <begin position="106"/>
        <end position="121"/>
    </location>
</feature>
<feature type="compositionally biased region" description="Polar residues" evidence="2">
    <location>
        <begin position="262"/>
        <end position="273"/>
    </location>
</feature>
<feature type="compositionally biased region" description="Polar residues" evidence="2">
    <location>
        <begin position="282"/>
        <end position="294"/>
    </location>
</feature>
<proteinExistence type="predicted"/>
<name>PMAP1_SCHPO</name>
<reference key="1">
    <citation type="journal article" date="1996" name="Mol. Cell. Biol.">
        <title>Schizosaccharomyces pombe map1+ encodes a MADS-box-family protein required for cell-type-specific gene expression.</title>
        <authorList>
            <person name="Yabana N."/>
            <person name="Yamamoto M."/>
        </authorList>
    </citation>
    <scope>NUCLEOTIDE SEQUENCE [GENOMIC DNA]</scope>
</reference>
<reference key="2">
    <citation type="journal article" date="1996" name="Mol. Gen. Genet.">
        <title>The Schizosaccharomyces pombe map1 gene encodes an SRF/MCM1-related protein required for P-cell specific gene expression.</title>
        <authorList>
            <person name="Nielsen O."/>
            <person name="Friis T."/>
            <person name="Kjaerulff S."/>
        </authorList>
    </citation>
    <scope>NUCLEOTIDE SEQUENCE [GENOMIC DNA]</scope>
</reference>
<reference key="3">
    <citation type="journal article" date="2002" name="Nature">
        <title>The genome sequence of Schizosaccharomyces pombe.</title>
        <authorList>
            <person name="Wood V."/>
            <person name="Gwilliam R."/>
            <person name="Rajandream M.A."/>
            <person name="Lyne M.H."/>
            <person name="Lyne R."/>
            <person name="Stewart A."/>
            <person name="Sgouros J.G."/>
            <person name="Peat N."/>
            <person name="Hayles J."/>
            <person name="Baker S.G."/>
            <person name="Basham D."/>
            <person name="Bowman S."/>
            <person name="Brooks K."/>
            <person name="Brown D."/>
            <person name="Brown S."/>
            <person name="Chillingworth T."/>
            <person name="Churcher C.M."/>
            <person name="Collins M."/>
            <person name="Connor R."/>
            <person name="Cronin A."/>
            <person name="Davis P."/>
            <person name="Feltwell T."/>
            <person name="Fraser A."/>
            <person name="Gentles S."/>
            <person name="Goble A."/>
            <person name="Hamlin N."/>
            <person name="Harris D.E."/>
            <person name="Hidalgo J."/>
            <person name="Hodgson G."/>
            <person name="Holroyd S."/>
            <person name="Hornsby T."/>
            <person name="Howarth S."/>
            <person name="Huckle E.J."/>
            <person name="Hunt S."/>
            <person name="Jagels K."/>
            <person name="James K.D."/>
            <person name="Jones L."/>
            <person name="Jones M."/>
            <person name="Leather S."/>
            <person name="McDonald S."/>
            <person name="McLean J."/>
            <person name="Mooney P."/>
            <person name="Moule S."/>
            <person name="Mungall K.L."/>
            <person name="Murphy L.D."/>
            <person name="Niblett D."/>
            <person name="Odell C."/>
            <person name="Oliver K."/>
            <person name="O'Neil S."/>
            <person name="Pearson D."/>
            <person name="Quail M.A."/>
            <person name="Rabbinowitsch E."/>
            <person name="Rutherford K.M."/>
            <person name="Rutter S."/>
            <person name="Saunders D."/>
            <person name="Seeger K."/>
            <person name="Sharp S."/>
            <person name="Skelton J."/>
            <person name="Simmonds M.N."/>
            <person name="Squares R."/>
            <person name="Squares S."/>
            <person name="Stevens K."/>
            <person name="Taylor K."/>
            <person name="Taylor R.G."/>
            <person name="Tivey A."/>
            <person name="Walsh S.V."/>
            <person name="Warren T."/>
            <person name="Whitehead S."/>
            <person name="Woodward J.R."/>
            <person name="Volckaert G."/>
            <person name="Aert R."/>
            <person name="Robben J."/>
            <person name="Grymonprez B."/>
            <person name="Weltjens I."/>
            <person name="Vanstreels E."/>
            <person name="Rieger M."/>
            <person name="Schaefer M."/>
            <person name="Mueller-Auer S."/>
            <person name="Gabel C."/>
            <person name="Fuchs M."/>
            <person name="Duesterhoeft A."/>
            <person name="Fritzc C."/>
            <person name="Holzer E."/>
            <person name="Moestl D."/>
            <person name="Hilbert H."/>
            <person name="Borzym K."/>
            <person name="Langer I."/>
            <person name="Beck A."/>
            <person name="Lehrach H."/>
            <person name="Reinhardt R."/>
            <person name="Pohl T.M."/>
            <person name="Eger P."/>
            <person name="Zimmermann W."/>
            <person name="Wedler H."/>
            <person name="Wambutt R."/>
            <person name="Purnelle B."/>
            <person name="Goffeau A."/>
            <person name="Cadieu E."/>
            <person name="Dreano S."/>
            <person name="Gloux S."/>
            <person name="Lelaure V."/>
            <person name="Mottier S."/>
            <person name="Galibert F."/>
            <person name="Aves S.J."/>
            <person name="Xiang Z."/>
            <person name="Hunt C."/>
            <person name="Moore K."/>
            <person name="Hurst S.M."/>
            <person name="Lucas M."/>
            <person name="Rochet M."/>
            <person name="Gaillardin C."/>
            <person name="Tallada V.A."/>
            <person name="Garzon A."/>
            <person name="Thode G."/>
            <person name="Daga R.R."/>
            <person name="Cruzado L."/>
            <person name="Jimenez J."/>
            <person name="Sanchez M."/>
            <person name="del Rey F."/>
            <person name="Benito J."/>
            <person name="Dominguez A."/>
            <person name="Revuelta J.L."/>
            <person name="Moreno S."/>
            <person name="Armstrong J."/>
            <person name="Forsburg S.L."/>
            <person name="Cerutti L."/>
            <person name="Lowe T."/>
            <person name="McCombie W.R."/>
            <person name="Paulsen I."/>
            <person name="Potashkin J."/>
            <person name="Shpakovski G.V."/>
            <person name="Ussery D."/>
            <person name="Barrell B.G."/>
            <person name="Nurse P."/>
        </authorList>
    </citation>
    <scope>NUCLEOTIDE SEQUENCE [LARGE SCALE GENOMIC DNA]</scope>
    <source>
        <strain>972 / ATCC 24843</strain>
    </source>
</reference>
<keyword id="KW-0010">Activator</keyword>
<keyword id="KW-0238">DNA-binding</keyword>
<keyword id="KW-0539">Nucleus</keyword>
<keyword id="KW-1185">Reference proteome</keyword>
<keyword id="KW-0804">Transcription</keyword>
<keyword id="KW-0805">Transcription regulation</keyword>
<evidence type="ECO:0000255" key="1">
    <source>
        <dbReference type="PROSITE-ProRule" id="PRU00251"/>
    </source>
</evidence>
<evidence type="ECO:0000256" key="2">
    <source>
        <dbReference type="SAM" id="MobiDB-lite"/>
    </source>
</evidence>
<accession>P78926</accession>
<accession>Q10291</accession>
<sequence>MMDERKLSNFQIDGEKAYTGSSQGNSYLEDRQKRQNTFTKRKAGIFKKANELALLTGSEVMVLVVSETGLVHTFSTPKLENVVKSPEGQKLITESLINATTDQNESQASQAKQSSAQLSDSESGYPLDHEEMRISEENGPSHIENLNFFSDIDNFSKTSAEEIASKLFSSVSPTHETLQFDHGLQNLEGFQANEHPEMFADHSIDFYNSNNVDIPALSMLTSQTSSSSTLNLPPEPASREVKIFPKQGKRIFSPSTGIDYETTGQHSVNSPPSTYKHRRSLNKSFATRSEPQTPRKNKIRDSLQSSPLNFPPRDRPPLIPISRIAVPSTIETEERQYRGNQKIINFYAKIFEPNSGLGTSSEGASSSFPDVDPNLAQNGVPYYSLPDIDHNQFDHLRR</sequence>
<gene>
    <name type="primary">map1</name>
    <name type="ORF">SPAC11E3.06</name>
</gene>
<dbReference type="EMBL" id="D78483">
    <property type="protein sequence ID" value="BAA11385.1"/>
    <property type="molecule type" value="Genomic_DNA"/>
</dbReference>
<dbReference type="EMBL" id="CU329670">
    <property type="protein sequence ID" value="CAB11185.1"/>
    <property type="molecule type" value="Genomic_DNA"/>
</dbReference>
<dbReference type="EMBL" id="L77973">
    <property type="protein sequence ID" value="AAA99295.1"/>
    <property type="status" value="ALT_SEQ"/>
    <property type="molecule type" value="Genomic_DNA"/>
</dbReference>
<dbReference type="PIR" id="T43225">
    <property type="entry name" value="T43225"/>
</dbReference>
<dbReference type="PIR" id="T43415">
    <property type="entry name" value="T43415"/>
</dbReference>
<dbReference type="RefSeq" id="NP_594931.1">
    <property type="nucleotide sequence ID" value="NM_001020362.2"/>
</dbReference>
<dbReference type="SMR" id="P78926"/>
<dbReference type="BioGRID" id="278259">
    <property type="interactions" value="1"/>
</dbReference>
<dbReference type="FunCoup" id="P78926">
    <property type="interactions" value="11"/>
</dbReference>
<dbReference type="STRING" id="284812.P78926"/>
<dbReference type="iPTMnet" id="P78926"/>
<dbReference type="PaxDb" id="4896-SPAC11E3.06.1"/>
<dbReference type="EnsemblFungi" id="SPAC11E3.06.1">
    <property type="protein sequence ID" value="SPAC11E3.06.1:pep"/>
    <property type="gene ID" value="SPAC11E3.06"/>
</dbReference>
<dbReference type="GeneID" id="2541765"/>
<dbReference type="KEGG" id="spo:2541765"/>
<dbReference type="PomBase" id="SPAC11E3.06">
    <property type="gene designation" value="map1"/>
</dbReference>
<dbReference type="VEuPathDB" id="FungiDB:SPAC11E3.06"/>
<dbReference type="eggNOG" id="KOG0015">
    <property type="taxonomic scope" value="Eukaryota"/>
</dbReference>
<dbReference type="HOGENOM" id="CLU_692908_0_0_1"/>
<dbReference type="InParanoid" id="P78926"/>
<dbReference type="Reactome" id="R-SPO-9031628">
    <property type="pathway name" value="NGF-stimulated transcription"/>
</dbReference>
<dbReference type="PRO" id="PR:P78926"/>
<dbReference type="Proteomes" id="UP000002485">
    <property type="component" value="Chromosome I"/>
</dbReference>
<dbReference type="GO" id="GO:0005634">
    <property type="term" value="C:nucleus"/>
    <property type="evidence" value="ECO:0007005"/>
    <property type="project" value="PomBase"/>
</dbReference>
<dbReference type="GO" id="GO:0001228">
    <property type="term" value="F:DNA-binding transcription activator activity, RNA polymerase II-specific"/>
    <property type="evidence" value="ECO:0000315"/>
    <property type="project" value="PomBase"/>
</dbReference>
<dbReference type="GO" id="GO:0000981">
    <property type="term" value="F:DNA-binding transcription factor activity, RNA polymerase II-specific"/>
    <property type="evidence" value="ECO:0000318"/>
    <property type="project" value="GO_Central"/>
</dbReference>
<dbReference type="GO" id="GO:0046983">
    <property type="term" value="F:protein dimerization activity"/>
    <property type="evidence" value="ECO:0007669"/>
    <property type="project" value="InterPro"/>
</dbReference>
<dbReference type="GO" id="GO:0000978">
    <property type="term" value="F:RNA polymerase II cis-regulatory region sequence-specific DNA binding"/>
    <property type="evidence" value="ECO:0000318"/>
    <property type="project" value="GO_Central"/>
</dbReference>
<dbReference type="GO" id="GO:0010514">
    <property type="term" value="P:induction of conjugation with cellular fusion"/>
    <property type="evidence" value="ECO:0000315"/>
    <property type="project" value="PomBase"/>
</dbReference>
<dbReference type="GO" id="GO:0045944">
    <property type="term" value="P:positive regulation of transcription by RNA polymerase II"/>
    <property type="evidence" value="ECO:0000315"/>
    <property type="project" value="PomBase"/>
</dbReference>
<dbReference type="GO" id="GO:0006357">
    <property type="term" value="P:regulation of transcription by RNA polymerase II"/>
    <property type="evidence" value="ECO:0000315"/>
    <property type="project" value="PomBase"/>
</dbReference>
<dbReference type="GO" id="GO:0023052">
    <property type="term" value="P:signaling"/>
    <property type="evidence" value="ECO:0000303"/>
    <property type="project" value="PomBase"/>
</dbReference>
<dbReference type="CDD" id="cd00266">
    <property type="entry name" value="MADS_SRF_like"/>
    <property type="match status" value="1"/>
</dbReference>
<dbReference type="FunFam" id="3.40.1810.10:FF:000002">
    <property type="entry name" value="Serum response factor b"/>
    <property type="match status" value="1"/>
</dbReference>
<dbReference type="Gene3D" id="3.40.1810.10">
    <property type="entry name" value="Transcription factor, MADS-box"/>
    <property type="match status" value="1"/>
</dbReference>
<dbReference type="InterPro" id="IPR050142">
    <property type="entry name" value="MADS-box/MEF2_TF"/>
</dbReference>
<dbReference type="InterPro" id="IPR033897">
    <property type="entry name" value="SRF-like_MADS-box"/>
</dbReference>
<dbReference type="InterPro" id="IPR002100">
    <property type="entry name" value="TF_MADSbox"/>
</dbReference>
<dbReference type="InterPro" id="IPR036879">
    <property type="entry name" value="TF_MADSbox_sf"/>
</dbReference>
<dbReference type="PANTHER" id="PTHR48019">
    <property type="entry name" value="SERUM RESPONSE FACTOR HOMOLOG"/>
    <property type="match status" value="1"/>
</dbReference>
<dbReference type="Pfam" id="PF00319">
    <property type="entry name" value="SRF-TF"/>
    <property type="match status" value="1"/>
</dbReference>
<dbReference type="PRINTS" id="PR00404">
    <property type="entry name" value="MADSDOMAIN"/>
</dbReference>
<dbReference type="SMART" id="SM00432">
    <property type="entry name" value="MADS"/>
    <property type="match status" value="1"/>
</dbReference>
<dbReference type="SUPFAM" id="SSF55455">
    <property type="entry name" value="SRF-like"/>
    <property type="match status" value="1"/>
</dbReference>
<dbReference type="PROSITE" id="PS00350">
    <property type="entry name" value="MADS_BOX_1"/>
    <property type="match status" value="1"/>
</dbReference>
<dbReference type="PROSITE" id="PS50066">
    <property type="entry name" value="MADS_BOX_2"/>
    <property type="match status" value="1"/>
</dbReference>